<dbReference type="EMBL" id="AC091246">
    <property type="protein sequence ID" value="AAR01650.1"/>
    <property type="molecule type" value="Genomic_DNA"/>
</dbReference>
<dbReference type="EMBL" id="DP000009">
    <property type="protein sequence ID" value="ABF97710.1"/>
    <property type="molecule type" value="Genomic_DNA"/>
</dbReference>
<dbReference type="EMBL" id="AP008209">
    <property type="protein sequence ID" value="BAF12612.1"/>
    <property type="molecule type" value="Genomic_DNA"/>
</dbReference>
<dbReference type="EMBL" id="AP014959">
    <property type="protein sequence ID" value="BAS85340.1"/>
    <property type="molecule type" value="Genomic_DNA"/>
</dbReference>
<dbReference type="EMBL" id="AK101109">
    <property type="protein sequence ID" value="BAG94918.1"/>
    <property type="molecule type" value="mRNA"/>
</dbReference>
<dbReference type="RefSeq" id="XP_015628144.1">
    <property type="nucleotide sequence ID" value="XM_015772658.1"/>
</dbReference>
<dbReference type="SMR" id="Q75LV5"/>
<dbReference type="FunCoup" id="Q75LV5">
    <property type="interactions" value="1866"/>
</dbReference>
<dbReference type="STRING" id="39947.Q75LV5"/>
<dbReference type="PaxDb" id="39947-Q75LV5"/>
<dbReference type="EnsemblPlants" id="Os03t0625900-01">
    <property type="protein sequence ID" value="Os03t0625900-01"/>
    <property type="gene ID" value="Os03g0625900"/>
</dbReference>
<dbReference type="Gramene" id="Os03t0625900-01">
    <property type="protein sequence ID" value="Os03t0625900-01"/>
    <property type="gene ID" value="Os03g0625900"/>
</dbReference>
<dbReference type="KEGG" id="dosa:Os03g0625900"/>
<dbReference type="eggNOG" id="KOG0299">
    <property type="taxonomic scope" value="Eukaryota"/>
</dbReference>
<dbReference type="HOGENOM" id="CLU_014017_1_1_1"/>
<dbReference type="InParanoid" id="Q75LV5"/>
<dbReference type="OMA" id="CSLRIWK"/>
<dbReference type="OrthoDB" id="189968at2759"/>
<dbReference type="Proteomes" id="UP000000763">
    <property type="component" value="Chromosome 3"/>
</dbReference>
<dbReference type="Proteomes" id="UP000059680">
    <property type="component" value="Chromosome 3"/>
</dbReference>
<dbReference type="GO" id="GO:0005730">
    <property type="term" value="C:nucleolus"/>
    <property type="evidence" value="ECO:0007669"/>
    <property type="project" value="UniProtKB-SubCell"/>
</dbReference>
<dbReference type="GO" id="GO:0032040">
    <property type="term" value="C:small-subunit processome"/>
    <property type="evidence" value="ECO:0000318"/>
    <property type="project" value="GO_Central"/>
</dbReference>
<dbReference type="GO" id="GO:0030515">
    <property type="term" value="F:snoRNA binding"/>
    <property type="evidence" value="ECO:0000318"/>
    <property type="project" value="GO_Central"/>
</dbReference>
<dbReference type="GO" id="GO:0034511">
    <property type="term" value="F:U3 snoRNA binding"/>
    <property type="evidence" value="ECO:0007669"/>
    <property type="project" value="InterPro"/>
</dbReference>
<dbReference type="GO" id="GO:0006364">
    <property type="term" value="P:rRNA processing"/>
    <property type="evidence" value="ECO:0007669"/>
    <property type="project" value="UniProtKB-KW"/>
</dbReference>
<dbReference type="CDD" id="cd00200">
    <property type="entry name" value="WD40"/>
    <property type="match status" value="1"/>
</dbReference>
<dbReference type="FunFam" id="2.130.10.10:FF:000483">
    <property type="entry name" value="U3 snoRNP-associated protein-like EMB2271"/>
    <property type="match status" value="1"/>
</dbReference>
<dbReference type="Gene3D" id="2.130.10.10">
    <property type="entry name" value="YVTN repeat-like/Quinoprotein amine dehydrogenase"/>
    <property type="match status" value="1"/>
</dbReference>
<dbReference type="InterPro" id="IPR020472">
    <property type="entry name" value="G-protein_beta_WD-40_rep"/>
</dbReference>
<dbReference type="InterPro" id="IPR039241">
    <property type="entry name" value="Rrp9-like"/>
</dbReference>
<dbReference type="InterPro" id="IPR015943">
    <property type="entry name" value="WD40/YVTN_repeat-like_dom_sf"/>
</dbReference>
<dbReference type="InterPro" id="IPR019775">
    <property type="entry name" value="WD40_repeat_CS"/>
</dbReference>
<dbReference type="InterPro" id="IPR036322">
    <property type="entry name" value="WD40_repeat_dom_sf"/>
</dbReference>
<dbReference type="InterPro" id="IPR001680">
    <property type="entry name" value="WD40_rpt"/>
</dbReference>
<dbReference type="PANTHER" id="PTHR19865">
    <property type="entry name" value="U3 SMALL NUCLEOLAR RNA INTERACTING PROTEIN 2"/>
    <property type="match status" value="1"/>
</dbReference>
<dbReference type="PANTHER" id="PTHR19865:SF0">
    <property type="entry name" value="U3 SMALL NUCLEOLAR RNA-INTERACTING PROTEIN 2"/>
    <property type="match status" value="1"/>
</dbReference>
<dbReference type="Pfam" id="PF00400">
    <property type="entry name" value="WD40"/>
    <property type="match status" value="4"/>
</dbReference>
<dbReference type="PRINTS" id="PR00320">
    <property type="entry name" value="GPROTEINBRPT"/>
</dbReference>
<dbReference type="SMART" id="SM00320">
    <property type="entry name" value="WD40"/>
    <property type="match status" value="6"/>
</dbReference>
<dbReference type="SUPFAM" id="SSF50978">
    <property type="entry name" value="WD40 repeat-like"/>
    <property type="match status" value="1"/>
</dbReference>
<dbReference type="PROSITE" id="PS00678">
    <property type="entry name" value="WD_REPEATS_1"/>
    <property type="match status" value="1"/>
</dbReference>
<dbReference type="PROSITE" id="PS50082">
    <property type="entry name" value="WD_REPEATS_2"/>
    <property type="match status" value="3"/>
</dbReference>
<dbReference type="PROSITE" id="PS50294">
    <property type="entry name" value="WD_REPEATS_REGION"/>
    <property type="match status" value="1"/>
</dbReference>
<feature type="chain" id="PRO_0000433092" description="U3 snoRNP-associated protein-like YAOH">
    <location>
        <begin position="1"/>
        <end position="511"/>
    </location>
</feature>
<feature type="repeat" description="WD 1" evidence="3">
    <location>
        <begin position="158"/>
        <end position="197"/>
    </location>
</feature>
<feature type="repeat" description="WD 2" evidence="3">
    <location>
        <begin position="217"/>
        <end position="256"/>
    </location>
</feature>
<feature type="repeat" description="WD 3" evidence="3">
    <location>
        <begin position="259"/>
        <end position="298"/>
    </location>
</feature>
<feature type="repeat" description="WD 4" evidence="3">
    <location>
        <begin position="301"/>
        <end position="339"/>
    </location>
</feature>
<feature type="repeat" description="WD 5" evidence="3">
    <location>
        <begin position="342"/>
        <end position="380"/>
    </location>
</feature>
<feature type="repeat" description="WD 6" evidence="3">
    <location>
        <begin position="412"/>
        <end position="451"/>
    </location>
</feature>
<feature type="repeat" description="WD 7" evidence="3">
    <location>
        <begin position="457"/>
        <end position="497"/>
    </location>
</feature>
<feature type="region of interest" description="Disordered" evidence="4">
    <location>
        <begin position="1"/>
        <end position="117"/>
    </location>
</feature>
<feature type="compositionally biased region" description="Basic residues" evidence="4">
    <location>
        <begin position="1"/>
        <end position="18"/>
    </location>
</feature>
<feature type="compositionally biased region" description="Acidic residues" evidence="4">
    <location>
        <begin position="44"/>
        <end position="53"/>
    </location>
</feature>
<feature type="compositionally biased region" description="Acidic residues" evidence="4">
    <location>
        <begin position="66"/>
        <end position="80"/>
    </location>
</feature>
<feature type="compositionally biased region" description="Basic and acidic residues" evidence="4">
    <location>
        <begin position="81"/>
        <end position="105"/>
    </location>
</feature>
<evidence type="ECO:0000250" key="1">
    <source>
        <dbReference type="UniProtKB" id="O43818"/>
    </source>
</evidence>
<evidence type="ECO:0000250" key="2">
    <source>
        <dbReference type="UniProtKB" id="Q9M0V4"/>
    </source>
</evidence>
<evidence type="ECO:0000255" key="3"/>
<evidence type="ECO:0000256" key="4">
    <source>
        <dbReference type="SAM" id="MobiDB-lite"/>
    </source>
</evidence>
<evidence type="ECO:0000305" key="5"/>
<evidence type="ECO:0000312" key="6">
    <source>
        <dbReference type="EMBL" id="ABF97710.1"/>
    </source>
</evidence>
<evidence type="ECO:0000312" key="7">
    <source>
        <dbReference type="EMBL" id="BAF12612.1"/>
    </source>
</evidence>
<sequence length="511" mass="57028">MAPRPRKRVSRPKPRATSRGRGGGDEDPFFESEPKRRRGGGRDEDIESEDSDLEGVAAAAAGGVGDDGEEEEEEEEEQETAGEKKMRIAKELLKKVTDAARRRREDDEDEDEGEEAGRRRVADILLKRQFEESGRKRMELADRILQPDPEDGFKMLVKHRQPVTAVVLSKDSDKGFSASKDGVIVHWDVETGKSEKYLWPSENVLVSHHAKPPLSAKRSKQVLALAVSADGRYLASGGLDRHIHLWDVRSREHIQAFSGHRGAISCLSFGPDSSELFSGSFDRKIMQWNAEDRTYMNCLFGHQNEVLTMDALSKDRLLTVARDRTMHLWKIPEESQLLFRAPATASLECCCFIDDKEFLTGSDDGSVELWSIMRKKPTHIIRNAHPVFRNNLNSLENNVEENGIHKPESVSSAQSWVSAIAARRGSDLAASGAANGSVRLWAIEPDSKGIRPLFSLRLDGFVNSLAIPKSGRFIVAGVGQEPRLGRWGRVRSAQNGVVIHPIRLKEESEDL</sequence>
<reference key="1">
    <citation type="journal article" date="2005" name="Genome Res.">
        <title>Sequence, annotation, and analysis of synteny between rice chromosome 3 and diverged grass species.</title>
        <authorList>
            <consortium name="The rice chromosome 3 sequencing consortium"/>
            <person name="Buell C.R."/>
            <person name="Yuan Q."/>
            <person name="Ouyang S."/>
            <person name="Liu J."/>
            <person name="Zhu W."/>
            <person name="Wang A."/>
            <person name="Maiti R."/>
            <person name="Haas B."/>
            <person name="Wortman J."/>
            <person name="Pertea M."/>
            <person name="Jones K.M."/>
            <person name="Kim M."/>
            <person name="Overton L."/>
            <person name="Tsitrin T."/>
            <person name="Fadrosh D."/>
            <person name="Bera J."/>
            <person name="Weaver B."/>
            <person name="Jin S."/>
            <person name="Johri S."/>
            <person name="Reardon M."/>
            <person name="Webb K."/>
            <person name="Hill J."/>
            <person name="Moffat K."/>
            <person name="Tallon L."/>
            <person name="Van Aken S."/>
            <person name="Lewis M."/>
            <person name="Utterback T."/>
            <person name="Feldblyum T."/>
            <person name="Zismann V."/>
            <person name="Iobst S."/>
            <person name="Hsiao J."/>
            <person name="de Vazeille A.R."/>
            <person name="Salzberg S.L."/>
            <person name="White O."/>
            <person name="Fraser C.M."/>
            <person name="Yu Y."/>
            <person name="Kim H."/>
            <person name="Rambo T."/>
            <person name="Currie J."/>
            <person name="Collura K."/>
            <person name="Kernodle-Thompson S."/>
            <person name="Wei F."/>
            <person name="Kudrna K."/>
            <person name="Ammiraju J.S.S."/>
            <person name="Luo M."/>
            <person name="Goicoechea J.L."/>
            <person name="Wing R.A."/>
            <person name="Henry D."/>
            <person name="Oates R."/>
            <person name="Palmer M."/>
            <person name="Pries G."/>
            <person name="Saski C."/>
            <person name="Simmons J."/>
            <person name="Soderlund C."/>
            <person name="Nelson W."/>
            <person name="de la Bastide M."/>
            <person name="Spiegel L."/>
            <person name="Nascimento L."/>
            <person name="Huang E."/>
            <person name="Preston R."/>
            <person name="Zutavern T."/>
            <person name="Palmer L."/>
            <person name="O'Shaughnessy A."/>
            <person name="Dike S."/>
            <person name="McCombie W.R."/>
            <person name="Minx P."/>
            <person name="Cordum H."/>
            <person name="Wilson R."/>
            <person name="Jin W."/>
            <person name="Lee H.R."/>
            <person name="Jiang J."/>
            <person name="Jackson S."/>
        </authorList>
    </citation>
    <scope>NUCLEOTIDE SEQUENCE [LARGE SCALE GENOMIC DNA]</scope>
    <source>
        <strain>cv. Nipponbare</strain>
    </source>
</reference>
<reference key="2">
    <citation type="journal article" date="2005" name="Nature">
        <title>The map-based sequence of the rice genome.</title>
        <authorList>
            <consortium name="International rice genome sequencing project (IRGSP)"/>
        </authorList>
    </citation>
    <scope>NUCLEOTIDE SEQUENCE [LARGE SCALE GENOMIC DNA]</scope>
    <source>
        <strain>cv. Nipponbare</strain>
    </source>
</reference>
<reference key="3">
    <citation type="journal article" date="2008" name="Nucleic Acids Res.">
        <title>The rice annotation project database (RAP-DB): 2008 update.</title>
        <authorList>
            <consortium name="The rice annotation project (RAP)"/>
        </authorList>
    </citation>
    <scope>GENOME REANNOTATION</scope>
    <source>
        <strain>cv. Nipponbare</strain>
    </source>
</reference>
<reference key="4">
    <citation type="journal article" date="2013" name="Rice">
        <title>Improvement of the Oryza sativa Nipponbare reference genome using next generation sequence and optical map data.</title>
        <authorList>
            <person name="Kawahara Y."/>
            <person name="de la Bastide M."/>
            <person name="Hamilton J.P."/>
            <person name="Kanamori H."/>
            <person name="McCombie W.R."/>
            <person name="Ouyang S."/>
            <person name="Schwartz D.C."/>
            <person name="Tanaka T."/>
            <person name="Wu J."/>
            <person name="Zhou S."/>
            <person name="Childs K.L."/>
            <person name="Davidson R.M."/>
            <person name="Lin H."/>
            <person name="Quesada-Ocampo L."/>
            <person name="Vaillancourt B."/>
            <person name="Sakai H."/>
            <person name="Lee S.S."/>
            <person name="Kim J."/>
            <person name="Numa H."/>
            <person name="Itoh T."/>
            <person name="Buell C.R."/>
            <person name="Matsumoto T."/>
        </authorList>
    </citation>
    <scope>GENOME REANNOTATION</scope>
    <source>
        <strain>cv. Nipponbare</strain>
    </source>
</reference>
<reference key="5">
    <citation type="journal article" date="2003" name="Science">
        <title>Collection, mapping, and annotation of over 28,000 cDNA clones from japonica rice.</title>
        <authorList>
            <consortium name="The rice full-length cDNA consortium"/>
        </authorList>
    </citation>
    <scope>NUCLEOTIDE SEQUENCE [LARGE SCALE MRNA]</scope>
    <source>
        <strain>cv. Nipponbare</strain>
    </source>
</reference>
<name>YAO_ORYSJ</name>
<protein>
    <recommendedName>
        <fullName evidence="5">U3 snoRNP-associated protein-like YAOH</fullName>
    </recommendedName>
    <alternativeName>
        <fullName evidence="5">Protein YAO homolog</fullName>
    </alternativeName>
</protein>
<keyword id="KW-0539">Nucleus</keyword>
<keyword id="KW-1185">Reference proteome</keyword>
<keyword id="KW-0677">Repeat</keyword>
<keyword id="KW-0687">Ribonucleoprotein</keyword>
<keyword id="KW-0694">RNA-binding</keyword>
<keyword id="KW-0698">rRNA processing</keyword>
<keyword id="KW-0853">WD repeat</keyword>
<comment type="function">
    <text evidence="1 2">Component of a nucleolar small nuclear ribonucleoprotein particle (snoRNP) thought to participate in the processing and modification of pre-ribosomal RNA (By similarity). Essential for embryogenesis (By similarity).</text>
</comment>
<comment type="subcellular location">
    <subcellularLocation>
        <location evidence="2">Nucleus</location>
        <location evidence="2">Nucleolus</location>
    </subcellularLocation>
</comment>
<comment type="similarity">
    <text evidence="5">Belongs to the WD repeat RRP9 family.</text>
</comment>
<proteinExistence type="evidence at transcript level"/>
<gene>
    <name evidence="7" type="ordered locus">Os03g0625900</name>
    <name evidence="6" type="ordered locus">LOC_Os03g42770</name>
</gene>
<accession>Q75LV5</accession>
<accession>A0A0P0W0D2</accession>
<organism>
    <name type="scientific">Oryza sativa subsp. japonica</name>
    <name type="common">Rice</name>
    <dbReference type="NCBI Taxonomy" id="39947"/>
    <lineage>
        <taxon>Eukaryota</taxon>
        <taxon>Viridiplantae</taxon>
        <taxon>Streptophyta</taxon>
        <taxon>Embryophyta</taxon>
        <taxon>Tracheophyta</taxon>
        <taxon>Spermatophyta</taxon>
        <taxon>Magnoliopsida</taxon>
        <taxon>Liliopsida</taxon>
        <taxon>Poales</taxon>
        <taxon>Poaceae</taxon>
        <taxon>BOP clade</taxon>
        <taxon>Oryzoideae</taxon>
        <taxon>Oryzeae</taxon>
        <taxon>Oryzinae</taxon>
        <taxon>Oryza</taxon>
        <taxon>Oryza sativa</taxon>
    </lineage>
</organism>